<evidence type="ECO:0000255" key="1">
    <source>
        <dbReference type="HAMAP-Rule" id="MF_00335"/>
    </source>
</evidence>
<evidence type="ECO:0000255" key="2">
    <source>
        <dbReference type="PROSITE-ProRule" id="PRU01175"/>
    </source>
</evidence>
<comment type="function">
    <text evidence="1">Endoribonuclease that initiates mRNA decay.</text>
</comment>
<comment type="subcellular location">
    <subcellularLocation>
        <location evidence="1">Cell membrane</location>
        <topology evidence="1">Single-pass membrane protein</topology>
    </subcellularLocation>
</comment>
<comment type="similarity">
    <text evidence="1">Belongs to the RNase Y family.</text>
</comment>
<proteinExistence type="inferred from homology"/>
<sequence length="522" mass="58242">MLNEILSGSSAAVISGLVGFYISKKITNANFDIYVEKAKAQAGAIENEAQLLLYKANIKSQEIEQEATKLYENAKDRAKADLSLREEDVNRKEQTFKRYKQNEERRLQDEVSTLKARQVDLKRNEKSLSSLKKRYEDKIDEALNAIEHCAGMTKEEATRVLLEKVEEKSRSEIAHVVRRYENEAKVEAKKRANYILAQATSRFAGEFAAERLTNLVHLNDDELKGRIIGKEGRNIKTLETLLGVDIIIDDTPNAILVSSFNLYRRAIATKTLELLIQDGRIQPARIEEIYNKVCEDFEADTLSEGEEIVIDLDIGVMHPELVKLIGKLRYRASYGQNALSHTLEVAHLAGIMASEMGGDARLAKRAGLLHDIGKALTHEHEGSHVDLGVQVCNRYNEHSVVINAIYAHHGHEEINSIECGAVCAADALSAARPGARREVLESFLKRVTAIEEIASQHSGVKQAYAINAGREVRVIVNASLINDDESILLAKEIASEIEHGVQYPGEIKVNVIRESRAVEFAK</sequence>
<accession>Q30SA7</accession>
<dbReference type="EC" id="3.1.-.-" evidence="1"/>
<dbReference type="EMBL" id="CP000153">
    <property type="protein sequence ID" value="ABB44124.1"/>
    <property type="molecule type" value="Genomic_DNA"/>
</dbReference>
<dbReference type="RefSeq" id="WP_011372476.1">
    <property type="nucleotide sequence ID" value="NC_007575.1"/>
</dbReference>
<dbReference type="STRING" id="326298.Suden_0846"/>
<dbReference type="KEGG" id="tdn:Suden_0846"/>
<dbReference type="eggNOG" id="COG1418">
    <property type="taxonomic scope" value="Bacteria"/>
</dbReference>
<dbReference type="HOGENOM" id="CLU_028328_1_0_7"/>
<dbReference type="OrthoDB" id="9803205at2"/>
<dbReference type="Proteomes" id="UP000002714">
    <property type="component" value="Chromosome"/>
</dbReference>
<dbReference type="GO" id="GO:0005886">
    <property type="term" value="C:plasma membrane"/>
    <property type="evidence" value="ECO:0007669"/>
    <property type="project" value="UniProtKB-SubCell"/>
</dbReference>
<dbReference type="GO" id="GO:0003723">
    <property type="term" value="F:RNA binding"/>
    <property type="evidence" value="ECO:0007669"/>
    <property type="project" value="UniProtKB-UniRule"/>
</dbReference>
<dbReference type="GO" id="GO:0004521">
    <property type="term" value="F:RNA endonuclease activity"/>
    <property type="evidence" value="ECO:0007669"/>
    <property type="project" value="UniProtKB-UniRule"/>
</dbReference>
<dbReference type="GO" id="GO:0006402">
    <property type="term" value="P:mRNA catabolic process"/>
    <property type="evidence" value="ECO:0007669"/>
    <property type="project" value="UniProtKB-UniRule"/>
</dbReference>
<dbReference type="CDD" id="cd00077">
    <property type="entry name" value="HDc"/>
    <property type="match status" value="1"/>
</dbReference>
<dbReference type="CDD" id="cd22431">
    <property type="entry name" value="KH-I_RNaseY"/>
    <property type="match status" value="1"/>
</dbReference>
<dbReference type="Gene3D" id="1.10.3210.10">
    <property type="entry name" value="Hypothetical protein af1432"/>
    <property type="match status" value="1"/>
</dbReference>
<dbReference type="Gene3D" id="3.30.1370.10">
    <property type="entry name" value="K Homology domain, type 1"/>
    <property type="match status" value="1"/>
</dbReference>
<dbReference type="HAMAP" id="MF_00335">
    <property type="entry name" value="RNase_Y"/>
    <property type="match status" value="1"/>
</dbReference>
<dbReference type="InterPro" id="IPR003607">
    <property type="entry name" value="HD/PDEase_dom"/>
</dbReference>
<dbReference type="InterPro" id="IPR006674">
    <property type="entry name" value="HD_domain"/>
</dbReference>
<dbReference type="InterPro" id="IPR006675">
    <property type="entry name" value="HDIG_dom"/>
</dbReference>
<dbReference type="InterPro" id="IPR004087">
    <property type="entry name" value="KH_dom"/>
</dbReference>
<dbReference type="InterPro" id="IPR004088">
    <property type="entry name" value="KH_dom_type_1"/>
</dbReference>
<dbReference type="InterPro" id="IPR036612">
    <property type="entry name" value="KH_dom_type_1_sf"/>
</dbReference>
<dbReference type="InterPro" id="IPR017705">
    <property type="entry name" value="Ribonuclease_Y"/>
</dbReference>
<dbReference type="InterPro" id="IPR022711">
    <property type="entry name" value="RNase_Y_N"/>
</dbReference>
<dbReference type="NCBIfam" id="TIGR00277">
    <property type="entry name" value="HDIG"/>
    <property type="match status" value="1"/>
</dbReference>
<dbReference type="NCBIfam" id="TIGR03319">
    <property type="entry name" value="RNase_Y"/>
    <property type="match status" value="1"/>
</dbReference>
<dbReference type="PANTHER" id="PTHR12826">
    <property type="entry name" value="RIBONUCLEASE Y"/>
    <property type="match status" value="1"/>
</dbReference>
<dbReference type="PANTHER" id="PTHR12826:SF15">
    <property type="entry name" value="RIBONUCLEASE Y"/>
    <property type="match status" value="1"/>
</dbReference>
<dbReference type="Pfam" id="PF01966">
    <property type="entry name" value="HD"/>
    <property type="match status" value="1"/>
</dbReference>
<dbReference type="Pfam" id="PF00013">
    <property type="entry name" value="KH_1"/>
    <property type="match status" value="1"/>
</dbReference>
<dbReference type="Pfam" id="PF12072">
    <property type="entry name" value="RNase_Y_N"/>
    <property type="match status" value="1"/>
</dbReference>
<dbReference type="SMART" id="SM00471">
    <property type="entry name" value="HDc"/>
    <property type="match status" value="1"/>
</dbReference>
<dbReference type="SMART" id="SM00322">
    <property type="entry name" value="KH"/>
    <property type="match status" value="1"/>
</dbReference>
<dbReference type="SUPFAM" id="SSF54791">
    <property type="entry name" value="Eukaryotic type KH-domain (KH-domain type I)"/>
    <property type="match status" value="1"/>
</dbReference>
<dbReference type="SUPFAM" id="SSF109604">
    <property type="entry name" value="HD-domain/PDEase-like"/>
    <property type="match status" value="1"/>
</dbReference>
<dbReference type="PROSITE" id="PS51831">
    <property type="entry name" value="HD"/>
    <property type="match status" value="1"/>
</dbReference>
<feature type="chain" id="PRO_0000344955" description="Ribonuclease Y">
    <location>
        <begin position="1"/>
        <end position="522"/>
    </location>
</feature>
<feature type="transmembrane region" description="Helical" evidence="1">
    <location>
        <begin position="7"/>
        <end position="23"/>
    </location>
</feature>
<feature type="domain" description="KH" evidence="1">
    <location>
        <begin position="212"/>
        <end position="278"/>
    </location>
</feature>
<feature type="domain" description="HD" evidence="2">
    <location>
        <begin position="338"/>
        <end position="431"/>
    </location>
</feature>
<name>RNY_SULDN</name>
<protein>
    <recommendedName>
        <fullName evidence="1">Ribonuclease Y</fullName>
        <shortName evidence="1">RNase Y</shortName>
        <ecNumber evidence="1">3.1.-.-</ecNumber>
    </recommendedName>
</protein>
<keyword id="KW-1003">Cell membrane</keyword>
<keyword id="KW-0255">Endonuclease</keyword>
<keyword id="KW-0378">Hydrolase</keyword>
<keyword id="KW-0472">Membrane</keyword>
<keyword id="KW-0540">Nuclease</keyword>
<keyword id="KW-1185">Reference proteome</keyword>
<keyword id="KW-0694">RNA-binding</keyword>
<keyword id="KW-0812">Transmembrane</keyword>
<keyword id="KW-1133">Transmembrane helix</keyword>
<gene>
    <name evidence="1" type="primary">rny</name>
    <name type="ordered locus">Suden_0846</name>
</gene>
<reference key="1">
    <citation type="journal article" date="2008" name="Appl. Environ. Microbiol.">
        <title>Genome of the epsilonproteobacterial chemolithoautotroph Sulfurimonas denitrificans.</title>
        <authorList>
            <person name="Sievert S.M."/>
            <person name="Scott K.M."/>
            <person name="Klotz M.G."/>
            <person name="Chain P.S.G."/>
            <person name="Hauser L.J."/>
            <person name="Hemp J."/>
            <person name="Huegler M."/>
            <person name="Land M."/>
            <person name="Lapidus A."/>
            <person name="Larimer F.W."/>
            <person name="Lucas S."/>
            <person name="Malfatti S.A."/>
            <person name="Meyer F."/>
            <person name="Paulsen I.T."/>
            <person name="Ren Q."/>
            <person name="Simon J."/>
            <person name="Bailey K."/>
            <person name="Diaz E."/>
            <person name="Fitzpatrick K.A."/>
            <person name="Glover B."/>
            <person name="Gwatney N."/>
            <person name="Korajkic A."/>
            <person name="Long A."/>
            <person name="Mobberley J.M."/>
            <person name="Pantry S.N."/>
            <person name="Pazder G."/>
            <person name="Peterson S."/>
            <person name="Quintanilla J.D."/>
            <person name="Sprinkle R."/>
            <person name="Stephens J."/>
            <person name="Thomas P."/>
            <person name="Vaughn R."/>
            <person name="Weber M.J."/>
            <person name="Wooten L.L."/>
        </authorList>
    </citation>
    <scope>NUCLEOTIDE SEQUENCE [LARGE SCALE GENOMIC DNA]</scope>
    <source>
        <strain>ATCC 33889 / DSM 1251</strain>
    </source>
</reference>
<organism>
    <name type="scientific">Sulfurimonas denitrificans (strain ATCC 33889 / DSM 1251)</name>
    <name type="common">Thiomicrospira denitrificans (strain ATCC 33889 / DSM 1251)</name>
    <dbReference type="NCBI Taxonomy" id="326298"/>
    <lineage>
        <taxon>Bacteria</taxon>
        <taxon>Pseudomonadati</taxon>
        <taxon>Campylobacterota</taxon>
        <taxon>Epsilonproteobacteria</taxon>
        <taxon>Campylobacterales</taxon>
        <taxon>Sulfurimonadaceae</taxon>
        <taxon>Sulfurimonas</taxon>
    </lineage>
</organism>